<dbReference type="EMBL" id="AL117237">
    <property type="protein sequence ID" value="CAB55305.1"/>
    <property type="molecule type" value="mRNA"/>
</dbReference>
<dbReference type="EMBL" id="AL022240">
    <property type="protein sequence ID" value="CAI20179.1"/>
    <property type="status" value="ALT_INIT"/>
    <property type="molecule type" value="Genomic_DNA"/>
</dbReference>
<dbReference type="EMBL" id="AL022240">
    <property type="protein sequence ID" value="CAI20180.1"/>
    <property type="status" value="ALT_SEQ"/>
    <property type="molecule type" value="Genomic_DNA"/>
</dbReference>
<dbReference type="EMBL" id="AL022240">
    <property type="protein sequence ID" value="CAI20181.1"/>
    <property type="status" value="ALT_SEQ"/>
    <property type="molecule type" value="Genomic_DNA"/>
</dbReference>
<dbReference type="EMBL" id="AL022240">
    <property type="protein sequence ID" value="CAI20182.1"/>
    <property type="status" value="ALT_SEQ"/>
    <property type="molecule type" value="Genomic_DNA"/>
</dbReference>
<dbReference type="EMBL" id="AL022240">
    <property type="protein sequence ID" value="CAI20183.1"/>
    <property type="status" value="ALT_SEQ"/>
    <property type="molecule type" value="Genomic_DNA"/>
</dbReference>
<dbReference type="EMBL" id="AL022240">
    <property type="protein sequence ID" value="CAI20184.1"/>
    <property type="status" value="ALT_SEQ"/>
    <property type="molecule type" value="Genomic_DNA"/>
</dbReference>
<dbReference type="EMBL" id="AL022240">
    <property type="protein sequence ID" value="CAI20185.1"/>
    <property type="status" value="ALT_SEQ"/>
    <property type="molecule type" value="Genomic_DNA"/>
</dbReference>
<dbReference type="EMBL" id="AL022240">
    <property type="protein sequence ID" value="CAI20186.1"/>
    <property type="status" value="ALT_SEQ"/>
    <property type="molecule type" value="Genomic_DNA"/>
</dbReference>
<dbReference type="EMBL" id="AC239811">
    <property type="status" value="NOT_ANNOTATED_CDS"/>
    <property type="molecule type" value="Genomic_DNA"/>
</dbReference>
<dbReference type="EMBL" id="AF379631">
    <property type="protein sequence ID" value="AAO15399.1"/>
    <property type="molecule type" value="mRNA"/>
</dbReference>
<dbReference type="CCDS" id="CCDS91039.1">
    <molecule id="Q5TI25-1"/>
</dbReference>
<dbReference type="RefSeq" id="NP_001382560.1">
    <molecule id="Q5TI25-1"/>
    <property type="nucleotide sequence ID" value="NM_001395631.1"/>
</dbReference>
<dbReference type="SMR" id="Q5TI25"/>
<dbReference type="IntAct" id="Q5TI25">
    <property type="interactions" value="2"/>
</dbReference>
<dbReference type="MINT" id="Q5TI25"/>
<dbReference type="iPTMnet" id="Q5TI25"/>
<dbReference type="PhosphoSitePlus" id="Q5TI25"/>
<dbReference type="BioMuta" id="NBPF14"/>
<dbReference type="DMDM" id="152123242"/>
<dbReference type="jPOST" id="Q5TI25"/>
<dbReference type="MassIVE" id="Q5TI25"/>
<dbReference type="PaxDb" id="9606-ENSP00000479693"/>
<dbReference type="PeptideAtlas" id="Q5TI25"/>
<dbReference type="ProteomicsDB" id="65171"/>
<dbReference type="Antibodypedia" id="77004">
    <property type="antibodies" value="6 antibodies from 3 providers"/>
</dbReference>
<dbReference type="Ensembl" id="ENST00000619423.4">
    <molecule id="Q5TI25-1"/>
    <property type="protein sequence ID" value="ENSP00000479693.1"/>
    <property type="gene ID" value="ENSG00000270629.7"/>
</dbReference>
<dbReference type="GeneID" id="25832"/>
<dbReference type="MANE-Select" id="ENST00000619423.4">
    <property type="protein sequence ID" value="ENSP00000479693.1"/>
    <property type="RefSeq nucleotide sequence ID" value="NM_001395631.1"/>
    <property type="RefSeq protein sequence ID" value="NP_001382560.1"/>
</dbReference>
<dbReference type="AGR" id="HGNC:25232"/>
<dbReference type="GeneCards" id="NBPF14"/>
<dbReference type="HGNC" id="HGNC:25232">
    <property type="gene designation" value="NBPF14"/>
</dbReference>
<dbReference type="MIM" id="614003">
    <property type="type" value="gene"/>
</dbReference>
<dbReference type="neXtProt" id="NX_Q5TI25"/>
<dbReference type="OpenTargets" id="ENSG00000270629"/>
<dbReference type="PharmGKB" id="PA142671273"/>
<dbReference type="VEuPathDB" id="HostDB:ENSG00000270629"/>
<dbReference type="eggNOG" id="ENOG502RU1I">
    <property type="taxonomic scope" value="Eukaryota"/>
</dbReference>
<dbReference type="GeneTree" id="ENSGT00420000029746"/>
<dbReference type="HOGENOM" id="CLU_226782_0_0_1"/>
<dbReference type="InParanoid" id="Q5TI25"/>
<dbReference type="PAN-GO" id="Q5TI25">
    <property type="GO annotations" value="0 GO annotations based on evolutionary models"/>
</dbReference>
<dbReference type="PhylomeDB" id="Q5TI25"/>
<dbReference type="PathwayCommons" id="Q5TI25"/>
<dbReference type="SignaLink" id="Q5TI25"/>
<dbReference type="ChiTaRS" id="NBPF14">
    <property type="organism name" value="human"/>
</dbReference>
<dbReference type="Pharos" id="Q5TI25">
    <property type="development level" value="Tdark"/>
</dbReference>
<dbReference type="PRO" id="PR:Q5TI25"/>
<dbReference type="Proteomes" id="UP000005640">
    <property type="component" value="Chromosome 1"/>
</dbReference>
<dbReference type="RNAct" id="Q5TI25">
    <property type="molecule type" value="protein"/>
</dbReference>
<dbReference type="Bgee" id="ENSG00000270629">
    <property type="expression patterns" value="Expressed in sural nerve and 100 other cell types or tissues"/>
</dbReference>
<dbReference type="GO" id="GO:0005737">
    <property type="term" value="C:cytoplasm"/>
    <property type="evidence" value="ECO:0007669"/>
    <property type="project" value="UniProtKB-SubCell"/>
</dbReference>
<dbReference type="InterPro" id="IPR055306">
    <property type="entry name" value="NBPF"/>
</dbReference>
<dbReference type="InterPro" id="IPR010630">
    <property type="entry name" value="Olduvai_dom"/>
</dbReference>
<dbReference type="PANTHER" id="PTHR14199:SF35">
    <property type="entry name" value="NEUROBLASTOMA BREAKPOINT FAMILY MEMBER 1-RELATED"/>
    <property type="match status" value="1"/>
</dbReference>
<dbReference type="PANTHER" id="PTHR14199">
    <property type="entry name" value="NEUROBLASTOMA BREAKPOINT FAMILY MEMBER 6-LIKE PROTEIN"/>
    <property type="match status" value="1"/>
</dbReference>
<dbReference type="Pfam" id="PF06758">
    <property type="entry name" value="Olduvai"/>
    <property type="match status" value="32"/>
</dbReference>
<dbReference type="SMART" id="SM01148">
    <property type="entry name" value="DUF1220"/>
    <property type="match status" value="32"/>
</dbReference>
<dbReference type="PROSITE" id="PS51316">
    <property type="entry name" value="ODV"/>
    <property type="match status" value="32"/>
</dbReference>
<feature type="chain" id="PRO_0000288048" description="NBPF family member NBPF14">
    <location>
        <begin position="1"/>
        <end position="2988"/>
    </location>
</feature>
<feature type="domain" description="Olduvai 1" evidence="2">
    <location>
        <begin position="165"/>
        <end position="259"/>
    </location>
</feature>
<feature type="domain" description="Olduvai 2" evidence="2">
    <location>
        <begin position="436"/>
        <end position="528"/>
    </location>
</feature>
<feature type="domain" description="Olduvai 3" evidence="2">
    <location>
        <begin position="529"/>
        <end position="600"/>
    </location>
</feature>
<feature type="domain" description="Olduvai 4" evidence="2">
    <location>
        <begin position="601"/>
        <end position="692"/>
    </location>
</feature>
<feature type="domain" description="Olduvai 5" evidence="2">
    <location>
        <begin position="695"/>
        <end position="750"/>
    </location>
</feature>
<feature type="domain" description="Olduvai 6" evidence="2">
    <location>
        <begin position="751"/>
        <end position="843"/>
    </location>
</feature>
<feature type="domain" description="Olduvai 7" evidence="2">
    <location>
        <begin position="844"/>
        <end position="919"/>
    </location>
</feature>
<feature type="domain" description="Olduvai 8" evidence="2">
    <location>
        <begin position="920"/>
        <end position="1012"/>
    </location>
</feature>
<feature type="domain" description="Olduvai 9" evidence="2">
    <location>
        <begin position="1013"/>
        <end position="1105"/>
    </location>
</feature>
<feature type="domain" description="Olduvai 10" evidence="2">
    <location>
        <begin position="1108"/>
        <end position="1163"/>
    </location>
</feature>
<feature type="domain" description="Olduvai 11" evidence="2">
    <location>
        <begin position="1164"/>
        <end position="1256"/>
    </location>
</feature>
<feature type="domain" description="Olduvai 12" evidence="2">
    <location>
        <begin position="1257"/>
        <end position="1349"/>
    </location>
</feature>
<feature type="domain" description="Olduvai 13" evidence="2">
    <location>
        <begin position="1352"/>
        <end position="1407"/>
    </location>
</feature>
<feature type="domain" description="Olduvai 14" evidence="2">
    <location>
        <begin position="1408"/>
        <end position="1500"/>
    </location>
</feature>
<feature type="domain" description="Olduvai 15" evidence="2">
    <location>
        <begin position="1501"/>
        <end position="1593"/>
    </location>
</feature>
<feature type="domain" description="Olduvai 16" evidence="2">
    <location>
        <begin position="1596"/>
        <end position="1651"/>
    </location>
</feature>
<feature type="domain" description="Olduvai 17" evidence="2">
    <location>
        <begin position="1652"/>
        <end position="1744"/>
    </location>
</feature>
<feature type="domain" description="Olduvai 18" evidence="2">
    <location>
        <begin position="1745"/>
        <end position="1837"/>
    </location>
</feature>
<feature type="domain" description="Olduvai 19" evidence="2">
    <location>
        <begin position="1840"/>
        <end position="1895"/>
    </location>
</feature>
<feature type="domain" description="Olduvai 20" evidence="2">
    <location>
        <begin position="1896"/>
        <end position="1988"/>
    </location>
</feature>
<feature type="domain" description="Olduvai 21" evidence="2">
    <location>
        <begin position="1989"/>
        <end position="2081"/>
    </location>
</feature>
<feature type="domain" description="Olduvai 22" evidence="2">
    <location>
        <begin position="2084"/>
        <end position="2139"/>
    </location>
</feature>
<feature type="domain" description="Olduvai 23" evidence="2">
    <location>
        <begin position="2140"/>
        <end position="2232"/>
    </location>
</feature>
<feature type="domain" description="Olduvai 24" evidence="2">
    <location>
        <begin position="2233"/>
        <end position="2325"/>
    </location>
</feature>
<feature type="domain" description="Olduvai 25" evidence="2">
    <location>
        <begin position="2328"/>
        <end position="2383"/>
    </location>
</feature>
<feature type="domain" description="Olduvai 26" evidence="2">
    <location>
        <begin position="2384"/>
        <end position="2476"/>
    </location>
</feature>
<feature type="domain" description="Olduvai 27" evidence="2">
    <location>
        <begin position="2477"/>
        <end position="2569"/>
    </location>
</feature>
<feature type="domain" description="Olduvai 28" evidence="2">
    <location>
        <begin position="2572"/>
        <end position="2627"/>
    </location>
</feature>
<feature type="domain" description="Olduvai 29" evidence="2">
    <location>
        <begin position="2628"/>
        <end position="2720"/>
    </location>
</feature>
<feature type="domain" description="Olduvai 30" evidence="2">
    <location>
        <begin position="2721"/>
        <end position="2813"/>
    </location>
</feature>
<feature type="domain" description="Olduvai 31" evidence="2">
    <location>
        <begin position="2816"/>
        <end position="2889"/>
    </location>
</feature>
<feature type="domain" description="Olduvai 32" evidence="2">
    <location>
        <begin position="2890"/>
        <end position="2988"/>
    </location>
</feature>
<feature type="region of interest" description="Disordered" evidence="3">
    <location>
        <begin position="161"/>
        <end position="200"/>
    </location>
</feature>
<feature type="region of interest" description="Disordered" evidence="3">
    <location>
        <begin position="451"/>
        <end position="474"/>
    </location>
</feature>
<feature type="region of interest" description="Disordered" evidence="3">
    <location>
        <begin position="520"/>
        <end position="566"/>
    </location>
</feature>
<feature type="region of interest" description="Disordered" evidence="3">
    <location>
        <begin position="754"/>
        <end position="773"/>
    </location>
</feature>
<feature type="region of interest" description="Disordered" evidence="3">
    <location>
        <begin position="828"/>
        <end position="871"/>
    </location>
</feature>
<feature type="region of interest" description="Disordered" evidence="3">
    <location>
        <begin position="999"/>
        <end position="1038"/>
    </location>
</feature>
<feature type="region of interest" description="Disordered" evidence="3">
    <location>
        <begin position="1243"/>
        <end position="1282"/>
    </location>
</feature>
<feature type="region of interest" description="Disordered" evidence="3">
    <location>
        <begin position="1487"/>
        <end position="1521"/>
    </location>
</feature>
<feature type="region of interest" description="Disordered" evidence="3">
    <location>
        <begin position="1731"/>
        <end position="1770"/>
    </location>
</feature>
<feature type="region of interest" description="Disordered" evidence="3">
    <location>
        <begin position="1975"/>
        <end position="2014"/>
    </location>
</feature>
<feature type="region of interest" description="Disordered" evidence="3">
    <location>
        <begin position="2219"/>
        <end position="2258"/>
    </location>
</feature>
<feature type="region of interest" description="Disordered" evidence="3">
    <location>
        <begin position="2463"/>
        <end position="2502"/>
    </location>
</feature>
<feature type="region of interest" description="Disordered" evidence="3">
    <location>
        <begin position="2707"/>
        <end position="2745"/>
    </location>
</feature>
<feature type="region of interest" description="Disordered" evidence="3">
    <location>
        <begin position="2877"/>
        <end position="2909"/>
    </location>
</feature>
<feature type="coiled-coil region" evidence="1">
    <location>
        <begin position="75"/>
        <end position="119"/>
    </location>
</feature>
<feature type="compositionally biased region" description="Acidic residues" evidence="3">
    <location>
        <begin position="165"/>
        <end position="177"/>
    </location>
</feature>
<feature type="compositionally biased region" description="Basic and acidic residues" evidence="3">
    <location>
        <begin position="190"/>
        <end position="200"/>
    </location>
</feature>
<feature type="compositionally biased region" description="Acidic residues" evidence="3">
    <location>
        <begin position="530"/>
        <end position="539"/>
    </location>
</feature>
<feature type="compositionally biased region" description="Acidic residues" evidence="3">
    <location>
        <begin position="550"/>
        <end position="562"/>
    </location>
</feature>
<feature type="compositionally biased region" description="Basic residues" evidence="3">
    <location>
        <begin position="831"/>
        <end position="849"/>
    </location>
</feature>
<feature type="compositionally biased region" description="Basic residues" evidence="3">
    <location>
        <begin position="1000"/>
        <end position="1018"/>
    </location>
</feature>
<feature type="compositionally biased region" description="Basic residues" evidence="3">
    <location>
        <begin position="1244"/>
        <end position="1262"/>
    </location>
</feature>
<feature type="compositionally biased region" description="Basic residues" evidence="3">
    <location>
        <begin position="1488"/>
        <end position="1506"/>
    </location>
</feature>
<feature type="compositionally biased region" description="Basic residues" evidence="3">
    <location>
        <begin position="1732"/>
        <end position="1750"/>
    </location>
</feature>
<feature type="compositionally biased region" description="Basic residues" evidence="3">
    <location>
        <begin position="1976"/>
        <end position="1994"/>
    </location>
</feature>
<feature type="compositionally biased region" description="Basic residues" evidence="3">
    <location>
        <begin position="2220"/>
        <end position="2238"/>
    </location>
</feature>
<feature type="compositionally biased region" description="Basic residues" evidence="3">
    <location>
        <begin position="2464"/>
        <end position="2482"/>
    </location>
</feature>
<feature type="compositionally biased region" description="Basic residues" evidence="3">
    <location>
        <begin position="2708"/>
        <end position="2726"/>
    </location>
</feature>
<feature type="compositionally biased region" description="Basic residues" evidence="3">
    <location>
        <begin position="2877"/>
        <end position="2895"/>
    </location>
</feature>
<feature type="splice variant" id="VSP_062427" description="In isoform 2.">
    <location>
        <begin position="1"/>
        <end position="340"/>
    </location>
</feature>
<feature type="splice variant" id="VSP_062428" description="In isoform 2.">
    <location>
        <begin position="756"/>
        <end position="2144"/>
    </location>
</feature>
<feature type="splice variant" id="VSP_062429" description="In isoform 2.">
    <original>EVLQDSLDRCYSTPSGYLELPDLGQPYSSAVYSLEEQYLGLALDVDRIKKDQEEEEDQGPPCPRLSRELLEVVEPEVLQDSLDRCYSTPSSCLEQPDSCQPYGSSFYALEEKHVGFSLDVGEIEKKGKGKKRRGRRSKKERRRGRKEGEEDQNPPCPRLSRELLDEKGPEVLQD</original>
    <variation>EVLQE</variation>
    <location>
        <begin position="2338"/>
        <end position="2511"/>
    </location>
</feature>
<feature type="splice variant" id="VSP_062430" description="In isoform 2.">
    <location>
        <begin position="2736"/>
        <end position="2904"/>
    </location>
</feature>
<feature type="sequence variant" id="VAR_032381" description="In dbSNP:rs1660533830.">
    <original>S</original>
    <variation>G</variation>
    <location>
        <position position="583"/>
    </location>
</feature>
<feature type="sequence conflict" description="In Ref. 1; CAB55305." evidence="5" ref="1">
    <original>Y</original>
    <variation>C</variation>
    <location>
        <position position="482"/>
    </location>
</feature>
<feature type="sequence conflict" description="In Ref. 1; CAB55305." evidence="5" ref="1">
    <original>S</original>
    <variation>P</variation>
    <location>
        <position position="488"/>
    </location>
</feature>
<feature type="sequence conflict" description="In Ref. 1; CAB55305." evidence="5" ref="1">
    <original>Q</original>
    <variation>K</variation>
    <location>
        <position position="579"/>
    </location>
</feature>
<feature type="sequence conflict" description="In Ref. 1; CAB55305." evidence="5" ref="1">
    <original>Q</original>
    <variation>H</variation>
    <location>
        <position position="612"/>
    </location>
</feature>
<feature type="sequence conflict" description="In Ref. 1; CAB55305." evidence="5" ref="1">
    <original>D</original>
    <variation>N</variation>
    <location>
        <position position="673"/>
    </location>
</feature>
<feature type="sequence conflict" description="In Ref. 1; CAB55305." evidence="5" ref="1">
    <original>D</original>
    <variation>G</variation>
    <location>
        <position position="712"/>
    </location>
</feature>
<feature type="sequence conflict" description="In Ref. 1; CAB55305." evidence="5" ref="1">
    <original>V</original>
    <variation>I</variation>
    <location>
        <position position="2295"/>
    </location>
</feature>
<feature type="sequence conflict" description="In Ref. 1; CAB55305." evidence="5" ref="1">
    <original>K</original>
    <variation>Q</variation>
    <location>
        <position position="2314"/>
    </location>
</feature>
<feature type="sequence conflict" description="In Ref. 1; CAB55305." evidence="5" ref="1">
    <original>R</original>
    <variation>G</variation>
    <location>
        <position position="2329"/>
    </location>
</feature>
<feature type="sequence conflict" description="In Ref. 1; CAB55305." evidence="5" ref="1">
    <original>V</original>
    <variation>I</variation>
    <location>
        <position position="2539"/>
    </location>
</feature>
<feature type="sequence conflict" description="In Ref. 1; CAB55305." evidence="5" ref="1">
    <original>K</original>
    <variation>Q</variation>
    <location>
        <position position="2558"/>
    </location>
</feature>
<feature type="sequence conflict" description="In Ref. 1; CAB55305." evidence="5" ref="1">
    <original>D</original>
    <variation>G</variation>
    <location>
        <position position="2589"/>
    </location>
</feature>
<feature type="sequence conflict" description="In Ref. 1; CAB55305." evidence="5" ref="1">
    <original>GV</original>
    <variation>SM</variation>
    <location>
        <begin position="2911"/>
        <end position="2912"/>
    </location>
</feature>
<feature type="sequence conflict" description="In Ref. 1; CAB55305." evidence="5" ref="1">
    <original>R</original>
    <variation>P</variation>
    <location>
        <position position="2919"/>
    </location>
</feature>
<feature type="sequence conflict" description="In Ref. 1; CAB55305." evidence="5" ref="1">
    <original>R</original>
    <variation>I</variation>
    <location>
        <position position="2928"/>
    </location>
</feature>
<feature type="sequence conflict" description="In Ref. 1; CAB55305." evidence="5" ref="1">
    <original>Q</original>
    <variation>E</variation>
    <location>
        <position position="2956"/>
    </location>
</feature>
<reference key="1">
    <citation type="submission" date="1999-09" db="EMBL/GenBank/DDBJ databases">
        <authorList>
            <person name="Rhodes S."/>
            <person name="Huckle E."/>
        </authorList>
    </citation>
    <scope>NUCLEOTIDE SEQUENCE [LARGE SCALE MRNA] (ISOFORM 2)</scope>
</reference>
<reference key="2">
    <citation type="journal article" date="2006" name="Nature">
        <title>The DNA sequence and biological annotation of human chromosome 1.</title>
        <authorList>
            <person name="Gregory S.G."/>
            <person name="Barlow K.F."/>
            <person name="McLay K.E."/>
            <person name="Kaul R."/>
            <person name="Swarbreck D."/>
            <person name="Dunham A."/>
            <person name="Scott C.E."/>
            <person name="Howe K.L."/>
            <person name="Woodfine K."/>
            <person name="Spencer C.C.A."/>
            <person name="Jones M.C."/>
            <person name="Gillson C."/>
            <person name="Searle S."/>
            <person name="Zhou Y."/>
            <person name="Kokocinski F."/>
            <person name="McDonald L."/>
            <person name="Evans R."/>
            <person name="Phillips K."/>
            <person name="Atkinson A."/>
            <person name="Cooper R."/>
            <person name="Jones C."/>
            <person name="Hall R.E."/>
            <person name="Andrews T.D."/>
            <person name="Lloyd C."/>
            <person name="Ainscough R."/>
            <person name="Almeida J.P."/>
            <person name="Ambrose K.D."/>
            <person name="Anderson F."/>
            <person name="Andrew R.W."/>
            <person name="Ashwell R.I.S."/>
            <person name="Aubin K."/>
            <person name="Babbage A.K."/>
            <person name="Bagguley C.L."/>
            <person name="Bailey J."/>
            <person name="Beasley H."/>
            <person name="Bethel G."/>
            <person name="Bird C.P."/>
            <person name="Bray-Allen S."/>
            <person name="Brown J.Y."/>
            <person name="Brown A.J."/>
            <person name="Buckley D."/>
            <person name="Burton J."/>
            <person name="Bye J."/>
            <person name="Carder C."/>
            <person name="Chapman J.C."/>
            <person name="Clark S.Y."/>
            <person name="Clarke G."/>
            <person name="Clee C."/>
            <person name="Cobley V."/>
            <person name="Collier R.E."/>
            <person name="Corby N."/>
            <person name="Coville G.J."/>
            <person name="Davies J."/>
            <person name="Deadman R."/>
            <person name="Dunn M."/>
            <person name="Earthrowl M."/>
            <person name="Ellington A.G."/>
            <person name="Errington H."/>
            <person name="Frankish A."/>
            <person name="Frankland J."/>
            <person name="French L."/>
            <person name="Garner P."/>
            <person name="Garnett J."/>
            <person name="Gay L."/>
            <person name="Ghori M.R.J."/>
            <person name="Gibson R."/>
            <person name="Gilby L.M."/>
            <person name="Gillett W."/>
            <person name="Glithero R.J."/>
            <person name="Grafham D.V."/>
            <person name="Griffiths C."/>
            <person name="Griffiths-Jones S."/>
            <person name="Grocock R."/>
            <person name="Hammond S."/>
            <person name="Harrison E.S.I."/>
            <person name="Hart E."/>
            <person name="Haugen E."/>
            <person name="Heath P.D."/>
            <person name="Holmes S."/>
            <person name="Holt K."/>
            <person name="Howden P.J."/>
            <person name="Hunt A.R."/>
            <person name="Hunt S.E."/>
            <person name="Hunter G."/>
            <person name="Isherwood J."/>
            <person name="James R."/>
            <person name="Johnson C."/>
            <person name="Johnson D."/>
            <person name="Joy A."/>
            <person name="Kay M."/>
            <person name="Kershaw J.K."/>
            <person name="Kibukawa M."/>
            <person name="Kimberley A.M."/>
            <person name="King A."/>
            <person name="Knights A.J."/>
            <person name="Lad H."/>
            <person name="Laird G."/>
            <person name="Lawlor S."/>
            <person name="Leongamornlert D.A."/>
            <person name="Lloyd D.M."/>
            <person name="Loveland J."/>
            <person name="Lovell J."/>
            <person name="Lush M.J."/>
            <person name="Lyne R."/>
            <person name="Martin S."/>
            <person name="Mashreghi-Mohammadi M."/>
            <person name="Matthews L."/>
            <person name="Matthews N.S.W."/>
            <person name="McLaren S."/>
            <person name="Milne S."/>
            <person name="Mistry S."/>
            <person name="Moore M.J.F."/>
            <person name="Nickerson T."/>
            <person name="O'Dell C.N."/>
            <person name="Oliver K."/>
            <person name="Palmeiri A."/>
            <person name="Palmer S.A."/>
            <person name="Parker A."/>
            <person name="Patel D."/>
            <person name="Pearce A.V."/>
            <person name="Peck A.I."/>
            <person name="Pelan S."/>
            <person name="Phelps K."/>
            <person name="Phillimore B.J."/>
            <person name="Plumb R."/>
            <person name="Rajan J."/>
            <person name="Raymond C."/>
            <person name="Rouse G."/>
            <person name="Saenphimmachak C."/>
            <person name="Sehra H.K."/>
            <person name="Sheridan E."/>
            <person name="Shownkeen R."/>
            <person name="Sims S."/>
            <person name="Skuce C.D."/>
            <person name="Smith M."/>
            <person name="Steward C."/>
            <person name="Subramanian S."/>
            <person name="Sycamore N."/>
            <person name="Tracey A."/>
            <person name="Tromans A."/>
            <person name="Van Helmond Z."/>
            <person name="Wall M."/>
            <person name="Wallis J.M."/>
            <person name="White S."/>
            <person name="Whitehead S.L."/>
            <person name="Wilkinson J.E."/>
            <person name="Willey D.L."/>
            <person name="Williams H."/>
            <person name="Wilming L."/>
            <person name="Wray P.W."/>
            <person name="Wu Z."/>
            <person name="Coulson A."/>
            <person name="Vaudin M."/>
            <person name="Sulston J.E."/>
            <person name="Durbin R.M."/>
            <person name="Hubbard T."/>
            <person name="Wooster R."/>
            <person name="Dunham I."/>
            <person name="Carter N.P."/>
            <person name="McVean G."/>
            <person name="Ross M.T."/>
            <person name="Harrow J."/>
            <person name="Olson M.V."/>
            <person name="Beck S."/>
            <person name="Rogers J."/>
            <person name="Bentley D.R."/>
        </authorList>
    </citation>
    <scope>NUCLEOTIDE SEQUENCE [LARGE SCALE GENOMIC DNA]</scope>
</reference>
<reference key="3">
    <citation type="journal article" date="2005" name="Mol. Biol. Evol.">
        <title>A novel gene family NBPF: intricate structure generated by gene duplications during primate evolution.</title>
        <authorList>
            <person name="Vandepoele K."/>
            <person name="Van Roy N."/>
            <person name="Staes K."/>
            <person name="Speleman F."/>
            <person name="van Roy F."/>
        </authorList>
    </citation>
    <scope>NUCLEOTIDE SEQUENCE [MRNA] OF 506-682</scope>
    <scope>TISSUE SPECIFICITY</scope>
</reference>
<accession>Q5TI25</accession>
<accession>A0A087WVU4</accession>
<accession>Q5TI23</accession>
<accession>Q8IX76</accession>
<accession>Q9UJI9</accession>
<name>NBPFE_HUMAN</name>
<proteinExistence type="evidence at protein level"/>
<protein>
    <recommendedName>
        <fullName evidence="5">NBPF family member NBPF14</fullName>
    </recommendedName>
    <alternativeName>
        <fullName>Neuroblastoma breakpoint family member 14</fullName>
    </alternativeName>
</protein>
<organism>
    <name type="scientific">Homo sapiens</name>
    <name type="common">Human</name>
    <dbReference type="NCBI Taxonomy" id="9606"/>
    <lineage>
        <taxon>Eukaryota</taxon>
        <taxon>Metazoa</taxon>
        <taxon>Chordata</taxon>
        <taxon>Craniata</taxon>
        <taxon>Vertebrata</taxon>
        <taxon>Euteleostomi</taxon>
        <taxon>Mammalia</taxon>
        <taxon>Eutheria</taxon>
        <taxon>Euarchontoglires</taxon>
        <taxon>Primates</taxon>
        <taxon>Haplorrhini</taxon>
        <taxon>Catarrhini</taxon>
        <taxon>Hominidae</taxon>
        <taxon>Homo</taxon>
    </lineage>
</organism>
<sequence length="2988" mass="343239">MVVSAGPWSSEKAEMNILEINETLRPQLAEKKQQFRNLKEKCFLTQLAGFLANQQKKYKYEECKDLIKFMLRNERQFKEEKLAEQLKQAEELRQYKVLVHSQERELTQLREKLREGRDASRSLYEHLQALLTPYEPDKSQGQDLQEQLAEGCRLAQHLVQKLSPENDEDEDEDVQVEEAEKVLESSAPREVQKAEESKVPEDSLEECAITCSNSHGPCDSNQPHKNIKITFEEDEVNSTLVVDRESSHDECQDALNILPVPGPTSSATNVSMVVSAGPLSSEKAEMNILEINEKLRPQLAEKKQQFRNLKEKCFLTQLSGFLANQQKKYKYEECKDLIKFMLRNERQFKEEKLAEQLKQAEELRQYKVLVHAQERELTQLREKLREGRDASRSLNEHLQALLTPDEPDKSQGQDLQEQLAEGCRLAQHLVQKLSPENDNDDDEDVQVEVAEKVQKSSAPREMQKAEEKEVPEDSLEECAITYSNSHGSYDSNQPHRKTKITFEEDKVDSTLIGSSSHVEWEDAVHIIPENESDDEEEEEKGPVSPRNLQESEEEEVPQESWDEGYSTLSIPPEMLASYQSYSSTFHSLEEQQVCMAVDIGRHRWDQVKKEDQEATGPRLSRELLDEKGPEVLQDSLDRCYSTPSGCLELTDSCQPYRSAFYVLEQQRVGLAVDMDEIEKYQEVEEDQDPSCPRLSRELLDEKEPEVLQDSLDRCYSTPSGYLELPDLGQPYSSAVYSLEEQYLGLALDVDRIKKDEEEEEDQDPPCPRLSRELLEVVEPEVLQDSLDRCYSTPSSCLEQPDSCQPYGSSFYALEEKHVGFSLDVGEIEKKGKGKKRRGRRSKKERRRGRKEGEEDQNPPCPRLSRELLDEKEPEVLQDSLDRCYSTPSGYLELPDLGQPYSSAVYSLEEQYLGLALDVDRIKKDEEEEEDQDPPCPRLSRELLEVVEPEVLQDSLDRCYSTPSSCLEQPDSCQPYGSSFYALEEKHVGFSLDVGEIEKKGKGKKRRGRRSKKERRRGRKEGEEDQNPPCPRLSRELLDEKGPEVLQDSLDRCYSTPSGCLELTDSCQPYRSAFYVLEQQRVGLAVDMDEIEKYQEVEEDQDPSCPRLSRELLDEKEPEVLQDSLDRCYSTPSGYLELPDLGQPYSSAVYSLEEQYLGLALDVDRIKKDEEEEEDQDPPCPRLSRELLEVVEPEVLQDSLDRCYSTPSSCLEQPDSCQPYGSSFYALEEKHVGFSLDVGEIEKKGKGKKRRGRRSKKERRRGRKEGEEDQNPPCPRLSRELLDEKGPEVLQDSLDRCYSTPSGCLELTDSCQPYRSAFYVLEQQRVGLAVDMDEIEKYQEVEEDQDPSCPRLSRELLDEKEPEVLQDSLDRCYSTPSGYLELPDLGQPYSSAVYSLEEQYLGLALDVDRIKKDEEEEEDQDPPCPRLSRELLEVVEPEVLQDSLDRCYSTPSSCLEQPDSCQPYGSSFYALEEKHVGFSLDVGEIEKKGKGKKRRGRRSKKERRRGRKEGEEDQNPPCPRLSRELLHEKGPEVLQDSLDRCYSTPSGCLELTDSCQPYRSAFYILEQQRVGLAVDMDEIEKYKEVEEDQDPSCPRLSRELLDEKEPEVLQDSLDRCYSTPSGYLELPDLGQPYSSAVYSLEEQYLGLALDVDRFKKDEEEEEDQDPPCPRLSRELLEVVEPEVLQDSLDRCYSTPSSCLEQPDSCQPYGSSFYALEEKHVGFSLDVGEIEKKGKGKKRRGRRSKKERRRGRKEGEEDQNPPCPRLSRELLDEKGPEVLQDSLDRCYSTPSGCLELTDSCQPYRSAFYVLEQQRVGLAVDMDEIEKYKEVEEDQDPSCPRLSRELLDEKEPEVLQDSLDRCYSTPSGYLELPDLGQPYSSAVYSLEEQYLGLALDVDRIKKDQEEEEDQGPPCPRLSRELLEVVEPEVLQDSLDRCYSTPSSCLEQPDSCQPYGSSFYALEEKHVGFSLDVGEIEKKGKGKKRRGRRSKKERRRGRKEGEEDQNPPCPRLSRELLDEKGPEVLQDSLDRCYSTPSGCLELTDSCQPYRSAFYVLEQQRVGLAVDMDEIEKYKEVEEDQDPSCPRLSRELLDEKEPEVLQDSLDRCYSTPSGYLELPDLGQPYSSAVYSLEEQYLGLALDVDRIKKDQEEEEDQGPPCPRLSRELLEVVEPEVLQDSLDRCYSTPSSCLEQPDSCQPYGSSFYALEEKHVGFSLDVGEIEKKGKGKKRRGRRSKKERRRGRKEGEEDQNPPCPRLSRELLDEKGPEVLQDSLDRCYSTPSGCLELTDSCQPYRSAFYVLEQQRVGLAVDMDEIEKYKEVEEDQDPSCPRLSRELLDEKEPEVLQDSLDRCYSTPSGYLELPDLGQPYSSAVYSLEEQYLGLALDVDRIKKDQEEEEDQGPPCPRLSRELLEVVEPEVLQDSLDRCYSTPSSCLEQPDSCQPYGSSFYALEEKHVGFSLDVGEIEKKGKGKKRRGRRSKKERRRGRKEGEEDQNPPCPRLSRELLDEKGPEVLQDSLDRCYSTPSGCLELTDSCQPYRSAFYVLEQQRVGLAVDMDEIEKYKEVEEDQDPSCPRLSRELLDEKEPEVLQDSLDRCYSTPSGYLELPDLGQPYSSAVYSLEEQYLGLALDVDRIKKDQEEEEDQGPPCPRLSRELLEVVEPEVLQDSLDRCYSTPSSCLEQPDSCQPYGSSFYALEEKHVGFSLDVGEIEKKGKGKKRRGRRSKKERRRGRKEGEEDQNPPCPRLSRELLDEKGPEVLQDSLDRCYSTPSGCLELTDSCQPYRSAFYVLEQQRVGLAVDMDEIEKYQEVEEDQDPSCPRLSRELLDEKDPEVLQDSLDRCYSTPSGYLELPDLGQPYSSAVYSLEEQYLGLALDVDKIEKKGKGKKRRGRRSKKERRRGRKEGEEDQNPPCPRLNGVLMEVEEREVLQDSLDRCYSTPSMYFELPDSFQHYRSVFYSFEEQHISFALYVDNRFFTLTVTSLHLVFQMGVIFPQ</sequence>
<comment type="subcellular location">
    <subcellularLocation>
        <location evidence="5">Cytoplasm</location>
    </subcellularLocation>
</comment>
<comment type="alternative products">
    <event type="alternative splicing"/>
    <isoform>
        <id>Q5TI25-1</id>
        <name>1</name>
        <sequence type="displayed"/>
    </isoform>
    <isoform>
        <id>Q5TI25-2</id>
        <name>2</name>
        <sequence type="described" ref="VSP_062427 VSP_062428 VSP_062429 VSP_062430"/>
    </isoform>
</comment>
<comment type="tissue specificity">
    <text evidence="4">Expressed in spleen and fetal liver.</text>
</comment>
<comment type="miscellaneous">
    <text>Encoded by one of the numerous copies of NBPF genes clustered in the p36, p12 and q21 region of the chromosome 1.</text>
</comment>
<comment type="similarity">
    <text evidence="5">Belongs to the NBPF family.</text>
</comment>
<comment type="sequence caution" evidence="5">
    <conflict type="erroneous initiation">
        <sequence resource="EMBL-CDS" id="CAI20179"/>
    </conflict>
</comment>
<comment type="sequence caution" evidence="5">
    <conflict type="erroneous gene model prediction">
        <sequence resource="EMBL-CDS" id="CAI20180"/>
    </conflict>
</comment>
<comment type="sequence caution" evidence="5">
    <conflict type="erroneous gene model prediction">
        <sequence resource="EMBL-CDS" id="CAI20181"/>
    </conflict>
</comment>
<comment type="sequence caution" evidence="5">
    <conflict type="erroneous gene model prediction">
        <sequence resource="EMBL-CDS" id="CAI20182"/>
    </conflict>
</comment>
<comment type="sequence caution" evidence="5">
    <conflict type="erroneous gene model prediction">
        <sequence resource="EMBL-CDS" id="CAI20183"/>
    </conflict>
</comment>
<comment type="sequence caution" evidence="5">
    <conflict type="erroneous gene model prediction">
        <sequence resource="EMBL-CDS" id="CAI20184"/>
    </conflict>
</comment>
<comment type="sequence caution" evidence="5">
    <conflict type="erroneous gene model prediction">
        <sequence resource="EMBL-CDS" id="CAI20185"/>
    </conflict>
</comment>
<comment type="sequence caution" evidence="5">
    <conflict type="erroneous gene model prediction">
        <sequence resource="EMBL-CDS" id="CAI20186"/>
    </conflict>
</comment>
<evidence type="ECO:0000255" key="1"/>
<evidence type="ECO:0000255" key="2">
    <source>
        <dbReference type="PROSITE-ProRule" id="PRU00647"/>
    </source>
</evidence>
<evidence type="ECO:0000256" key="3">
    <source>
        <dbReference type="SAM" id="MobiDB-lite"/>
    </source>
</evidence>
<evidence type="ECO:0000269" key="4">
    <source>
    </source>
</evidence>
<evidence type="ECO:0000305" key="5"/>
<evidence type="ECO:0000312" key="6">
    <source>
        <dbReference type="HGNC" id="HGNC:25232"/>
    </source>
</evidence>
<gene>
    <name evidence="6" type="primary">NBPF14</name>
</gene>
<keyword id="KW-0025">Alternative splicing</keyword>
<keyword id="KW-0175">Coiled coil</keyword>
<keyword id="KW-0963">Cytoplasm</keyword>
<keyword id="KW-1267">Proteomics identification</keyword>
<keyword id="KW-1185">Reference proteome</keyword>
<keyword id="KW-0677">Repeat</keyword>